<protein>
    <recommendedName>
        <fullName evidence="1">Cytochrome c biogenesis ATP-binding export protein CcmA</fullName>
        <ecNumber evidence="1">7.6.2.5</ecNumber>
    </recommendedName>
    <alternativeName>
        <fullName evidence="1">Heme exporter protein A</fullName>
    </alternativeName>
</protein>
<proteinExistence type="inferred from homology"/>
<sequence length="207" mass="23109">MGMLEVRELLCERDERTLFSGLSFTLNAGEWVQITGSNGAGKTTLLRLLTGLSRPDAGEVLWQGQPLHQVRDSYHQNLLWIGHQPGIKTRLTALENLHFYHRDGDTAQCLEALAQAGLAGFEDIPVNQLSAGQQRRVALARLWLTRATLWILDEPFTAIDVNGVDRLTQRMAQHTEQGGIVILTTHQPLNVAESKIRRISLTQTRAV</sequence>
<organism>
    <name type="scientific">Escherichia coli O157:H7</name>
    <dbReference type="NCBI Taxonomy" id="83334"/>
    <lineage>
        <taxon>Bacteria</taxon>
        <taxon>Pseudomonadati</taxon>
        <taxon>Pseudomonadota</taxon>
        <taxon>Gammaproteobacteria</taxon>
        <taxon>Enterobacterales</taxon>
        <taxon>Enterobacteriaceae</taxon>
        <taxon>Escherichia</taxon>
    </lineage>
</organism>
<evidence type="ECO:0000255" key="1">
    <source>
        <dbReference type="HAMAP-Rule" id="MF_01707"/>
    </source>
</evidence>
<evidence type="ECO:0000305" key="2"/>
<gene>
    <name evidence="1" type="primary">ccmA</name>
    <name type="ordered locus">Z3458</name>
    <name type="ordered locus">ECs3090</name>
</gene>
<name>CCMA_ECO57</name>
<keyword id="KW-0067">ATP-binding</keyword>
<keyword id="KW-0997">Cell inner membrane</keyword>
<keyword id="KW-1003">Cell membrane</keyword>
<keyword id="KW-0201">Cytochrome c-type biogenesis</keyword>
<keyword id="KW-0472">Membrane</keyword>
<keyword id="KW-0547">Nucleotide-binding</keyword>
<keyword id="KW-1185">Reference proteome</keyword>
<keyword id="KW-1278">Translocase</keyword>
<keyword id="KW-0813">Transport</keyword>
<comment type="function">
    <text evidence="1">Part of the ABC transporter complex CcmAB involved in the biogenesis of c-type cytochromes; once thought to export heme, this seems not to be the case, but its exact role is uncertain. Responsible for energy coupling to the transport system.</text>
</comment>
<comment type="catalytic activity">
    <reaction evidence="1">
        <text>heme b(in) + ATP + H2O = heme b(out) + ADP + phosphate + H(+)</text>
        <dbReference type="Rhea" id="RHEA:19261"/>
        <dbReference type="ChEBI" id="CHEBI:15377"/>
        <dbReference type="ChEBI" id="CHEBI:15378"/>
        <dbReference type="ChEBI" id="CHEBI:30616"/>
        <dbReference type="ChEBI" id="CHEBI:43474"/>
        <dbReference type="ChEBI" id="CHEBI:60344"/>
        <dbReference type="ChEBI" id="CHEBI:456216"/>
        <dbReference type="EC" id="7.6.2.5"/>
    </reaction>
</comment>
<comment type="subunit">
    <text evidence="1">The complex is composed of two ATP-binding proteins (CcmA) and two transmembrane proteins (CcmB).</text>
</comment>
<comment type="subcellular location">
    <subcellularLocation>
        <location evidence="1">Cell inner membrane</location>
        <topology evidence="1">Peripheral membrane protein</topology>
    </subcellularLocation>
</comment>
<comment type="similarity">
    <text evidence="1">Belongs to the ABC transporter superfamily. CcmA exporter (TC 3.A.1.107) family.</text>
</comment>
<comment type="sequence caution" evidence="2">
    <conflict type="erroneous initiation">
        <sequence resource="EMBL-CDS" id="AAG57336"/>
    </conflict>
</comment>
<comment type="sequence caution" evidence="2">
    <conflict type="erroneous initiation">
        <sequence resource="EMBL-CDS" id="BAB36513"/>
    </conflict>
</comment>
<feature type="chain" id="PRO_0000092178" description="Cytochrome c biogenesis ATP-binding export protein CcmA">
    <location>
        <begin position="1"/>
        <end position="207"/>
    </location>
</feature>
<feature type="domain" description="ABC transporter" evidence="1">
    <location>
        <begin position="4"/>
        <end position="207"/>
    </location>
</feature>
<feature type="binding site" evidence="1">
    <location>
        <begin position="36"/>
        <end position="43"/>
    </location>
    <ligand>
        <name>ATP</name>
        <dbReference type="ChEBI" id="CHEBI:30616"/>
    </ligand>
</feature>
<dbReference type="EC" id="7.6.2.5" evidence="1"/>
<dbReference type="EMBL" id="AE005174">
    <property type="protein sequence ID" value="AAG57336.1"/>
    <property type="status" value="ALT_INIT"/>
    <property type="molecule type" value="Genomic_DNA"/>
</dbReference>
<dbReference type="EMBL" id="BA000007">
    <property type="protein sequence ID" value="BAB36513.1"/>
    <property type="status" value="ALT_INIT"/>
    <property type="molecule type" value="Genomic_DNA"/>
</dbReference>
<dbReference type="PIR" id="B91015">
    <property type="entry name" value="B91015"/>
</dbReference>
<dbReference type="PIR" id="D85859">
    <property type="entry name" value="D85859"/>
</dbReference>
<dbReference type="RefSeq" id="NP_311117.1">
    <property type="nucleotide sequence ID" value="NC_002695.1"/>
</dbReference>
<dbReference type="SMR" id="Q8XE58"/>
<dbReference type="STRING" id="155864.Z3458"/>
<dbReference type="TCDB" id="3.A.1.107.3">
    <property type="family name" value="the atp-binding cassette (abc) superfamily"/>
</dbReference>
<dbReference type="GeneID" id="916796"/>
<dbReference type="KEGG" id="ece:Z3458"/>
<dbReference type="KEGG" id="ecs:ECs_3090"/>
<dbReference type="PATRIC" id="fig|386585.9.peg.3224"/>
<dbReference type="eggNOG" id="COG4133">
    <property type="taxonomic scope" value="Bacteria"/>
</dbReference>
<dbReference type="HOGENOM" id="CLU_000604_1_2_6"/>
<dbReference type="OMA" id="NLAWLCA"/>
<dbReference type="Proteomes" id="UP000000558">
    <property type="component" value="Chromosome"/>
</dbReference>
<dbReference type="Proteomes" id="UP000002519">
    <property type="component" value="Chromosome"/>
</dbReference>
<dbReference type="GO" id="GO:0005886">
    <property type="term" value="C:plasma membrane"/>
    <property type="evidence" value="ECO:0007669"/>
    <property type="project" value="UniProtKB-SubCell"/>
</dbReference>
<dbReference type="GO" id="GO:0015439">
    <property type="term" value="F:ABC-type heme transporter activity"/>
    <property type="evidence" value="ECO:0007669"/>
    <property type="project" value="UniProtKB-EC"/>
</dbReference>
<dbReference type="GO" id="GO:0005524">
    <property type="term" value="F:ATP binding"/>
    <property type="evidence" value="ECO:0007669"/>
    <property type="project" value="UniProtKB-KW"/>
</dbReference>
<dbReference type="GO" id="GO:0016887">
    <property type="term" value="F:ATP hydrolysis activity"/>
    <property type="evidence" value="ECO:0007669"/>
    <property type="project" value="InterPro"/>
</dbReference>
<dbReference type="GO" id="GO:0017004">
    <property type="term" value="P:cytochrome complex assembly"/>
    <property type="evidence" value="ECO:0007669"/>
    <property type="project" value="UniProtKB-KW"/>
</dbReference>
<dbReference type="CDD" id="cd03231">
    <property type="entry name" value="ABC_CcmA_heme_exporter"/>
    <property type="match status" value="1"/>
</dbReference>
<dbReference type="FunFam" id="3.40.50.300:FF:001098">
    <property type="entry name" value="Cytochrome c biogenesis ATP-binding export protein CcmA"/>
    <property type="match status" value="1"/>
</dbReference>
<dbReference type="Gene3D" id="3.40.50.300">
    <property type="entry name" value="P-loop containing nucleotide triphosphate hydrolases"/>
    <property type="match status" value="1"/>
</dbReference>
<dbReference type="InterPro" id="IPR003593">
    <property type="entry name" value="AAA+_ATPase"/>
</dbReference>
<dbReference type="InterPro" id="IPR003439">
    <property type="entry name" value="ABC_transporter-like_ATP-bd"/>
</dbReference>
<dbReference type="InterPro" id="IPR017871">
    <property type="entry name" value="ABC_transporter-like_CS"/>
</dbReference>
<dbReference type="InterPro" id="IPR005895">
    <property type="entry name" value="ABC_transptr_haem_export_CcmA"/>
</dbReference>
<dbReference type="InterPro" id="IPR027417">
    <property type="entry name" value="P-loop_NTPase"/>
</dbReference>
<dbReference type="NCBIfam" id="TIGR01189">
    <property type="entry name" value="ccmA"/>
    <property type="match status" value="1"/>
</dbReference>
<dbReference type="NCBIfam" id="NF010061">
    <property type="entry name" value="PRK13538.1"/>
    <property type="match status" value="1"/>
</dbReference>
<dbReference type="PANTHER" id="PTHR43499">
    <property type="entry name" value="ABC TRANSPORTER I FAMILY MEMBER 1"/>
    <property type="match status" value="1"/>
</dbReference>
<dbReference type="PANTHER" id="PTHR43499:SF1">
    <property type="entry name" value="ABC TRANSPORTER I FAMILY MEMBER 1"/>
    <property type="match status" value="1"/>
</dbReference>
<dbReference type="Pfam" id="PF00005">
    <property type="entry name" value="ABC_tran"/>
    <property type="match status" value="1"/>
</dbReference>
<dbReference type="SMART" id="SM00382">
    <property type="entry name" value="AAA"/>
    <property type="match status" value="1"/>
</dbReference>
<dbReference type="SUPFAM" id="SSF52540">
    <property type="entry name" value="P-loop containing nucleoside triphosphate hydrolases"/>
    <property type="match status" value="1"/>
</dbReference>
<dbReference type="PROSITE" id="PS00211">
    <property type="entry name" value="ABC_TRANSPORTER_1"/>
    <property type="match status" value="1"/>
</dbReference>
<dbReference type="PROSITE" id="PS50893">
    <property type="entry name" value="ABC_TRANSPORTER_2"/>
    <property type="match status" value="1"/>
</dbReference>
<dbReference type="PROSITE" id="PS51243">
    <property type="entry name" value="CCMA"/>
    <property type="match status" value="1"/>
</dbReference>
<reference key="1">
    <citation type="journal article" date="2001" name="Nature">
        <title>Genome sequence of enterohaemorrhagic Escherichia coli O157:H7.</title>
        <authorList>
            <person name="Perna N.T."/>
            <person name="Plunkett G. III"/>
            <person name="Burland V."/>
            <person name="Mau B."/>
            <person name="Glasner J.D."/>
            <person name="Rose D.J."/>
            <person name="Mayhew G.F."/>
            <person name="Evans P.S."/>
            <person name="Gregor J."/>
            <person name="Kirkpatrick H.A."/>
            <person name="Posfai G."/>
            <person name="Hackett J."/>
            <person name="Klink S."/>
            <person name="Boutin A."/>
            <person name="Shao Y."/>
            <person name="Miller L."/>
            <person name="Grotbeck E.J."/>
            <person name="Davis N.W."/>
            <person name="Lim A."/>
            <person name="Dimalanta E.T."/>
            <person name="Potamousis K."/>
            <person name="Apodaca J."/>
            <person name="Anantharaman T.S."/>
            <person name="Lin J."/>
            <person name="Yen G."/>
            <person name="Schwartz D.C."/>
            <person name="Welch R.A."/>
            <person name="Blattner F.R."/>
        </authorList>
    </citation>
    <scope>NUCLEOTIDE SEQUENCE [LARGE SCALE GENOMIC DNA]</scope>
    <source>
        <strain>O157:H7 / EDL933 / ATCC 700927 / EHEC</strain>
    </source>
</reference>
<reference key="2">
    <citation type="journal article" date="2001" name="DNA Res.">
        <title>Complete genome sequence of enterohemorrhagic Escherichia coli O157:H7 and genomic comparison with a laboratory strain K-12.</title>
        <authorList>
            <person name="Hayashi T."/>
            <person name="Makino K."/>
            <person name="Ohnishi M."/>
            <person name="Kurokawa K."/>
            <person name="Ishii K."/>
            <person name="Yokoyama K."/>
            <person name="Han C.-G."/>
            <person name="Ohtsubo E."/>
            <person name="Nakayama K."/>
            <person name="Murata T."/>
            <person name="Tanaka M."/>
            <person name="Tobe T."/>
            <person name="Iida T."/>
            <person name="Takami H."/>
            <person name="Honda T."/>
            <person name="Sasakawa C."/>
            <person name="Ogasawara N."/>
            <person name="Yasunaga T."/>
            <person name="Kuhara S."/>
            <person name="Shiba T."/>
            <person name="Hattori M."/>
            <person name="Shinagawa H."/>
        </authorList>
    </citation>
    <scope>NUCLEOTIDE SEQUENCE [LARGE SCALE GENOMIC DNA]</scope>
    <source>
        <strain>O157:H7 / Sakai / RIMD 0509952 / EHEC</strain>
    </source>
</reference>
<accession>Q8XE58</accession>